<sequence>MYIEMIDETGQVSQEIMEQTLDLLNFAAQKTGKEEKEMSVTFVTNERSHELNLEYRDTDRPTDVISLEYKPETPILFSQEDLAADPSLAEMMAEFDAYIGELFISIDKAREQSQEYGHSFEREMGFLAVHGFLHINGYDHYTLEEEKEMFTLQEEILTAYGLTRQ</sequence>
<dbReference type="EC" id="3.1.-.-" evidence="1"/>
<dbReference type="EMBL" id="CP000261">
    <property type="protein sequence ID" value="ABF35460.1"/>
    <property type="status" value="ALT_INIT"/>
    <property type="molecule type" value="Genomic_DNA"/>
</dbReference>
<dbReference type="SMR" id="Q1JD48"/>
<dbReference type="KEGG" id="spj:MGAS2096_Spy0408"/>
<dbReference type="HOGENOM" id="CLU_106710_3_0_9"/>
<dbReference type="GO" id="GO:0005737">
    <property type="term" value="C:cytoplasm"/>
    <property type="evidence" value="ECO:0007669"/>
    <property type="project" value="UniProtKB-SubCell"/>
</dbReference>
<dbReference type="GO" id="GO:0004222">
    <property type="term" value="F:metalloendopeptidase activity"/>
    <property type="evidence" value="ECO:0007669"/>
    <property type="project" value="InterPro"/>
</dbReference>
<dbReference type="GO" id="GO:0004521">
    <property type="term" value="F:RNA endonuclease activity"/>
    <property type="evidence" value="ECO:0007669"/>
    <property type="project" value="UniProtKB-UniRule"/>
</dbReference>
<dbReference type="GO" id="GO:0008270">
    <property type="term" value="F:zinc ion binding"/>
    <property type="evidence" value="ECO:0007669"/>
    <property type="project" value="UniProtKB-UniRule"/>
</dbReference>
<dbReference type="GO" id="GO:0006364">
    <property type="term" value="P:rRNA processing"/>
    <property type="evidence" value="ECO:0007669"/>
    <property type="project" value="UniProtKB-UniRule"/>
</dbReference>
<dbReference type="Gene3D" id="3.40.390.30">
    <property type="entry name" value="Metalloproteases ('zincins'), catalytic domain"/>
    <property type="match status" value="1"/>
</dbReference>
<dbReference type="HAMAP" id="MF_00009">
    <property type="entry name" value="Endoribonucl_YbeY"/>
    <property type="match status" value="1"/>
</dbReference>
<dbReference type="InterPro" id="IPR023091">
    <property type="entry name" value="MetalPrtase_cat_dom_sf_prd"/>
</dbReference>
<dbReference type="InterPro" id="IPR002036">
    <property type="entry name" value="YbeY"/>
</dbReference>
<dbReference type="InterPro" id="IPR020549">
    <property type="entry name" value="YbeY_CS"/>
</dbReference>
<dbReference type="NCBIfam" id="TIGR00043">
    <property type="entry name" value="rRNA maturation RNase YbeY"/>
    <property type="match status" value="1"/>
</dbReference>
<dbReference type="PANTHER" id="PTHR46986">
    <property type="entry name" value="ENDORIBONUCLEASE YBEY, CHLOROPLASTIC"/>
    <property type="match status" value="1"/>
</dbReference>
<dbReference type="PANTHER" id="PTHR46986:SF1">
    <property type="entry name" value="ENDORIBONUCLEASE YBEY, CHLOROPLASTIC"/>
    <property type="match status" value="1"/>
</dbReference>
<dbReference type="Pfam" id="PF02130">
    <property type="entry name" value="YbeY"/>
    <property type="match status" value="1"/>
</dbReference>
<dbReference type="SUPFAM" id="SSF55486">
    <property type="entry name" value="Metalloproteases ('zincins'), catalytic domain"/>
    <property type="match status" value="1"/>
</dbReference>
<dbReference type="PROSITE" id="PS01306">
    <property type="entry name" value="UPF0054"/>
    <property type="match status" value="1"/>
</dbReference>
<gene>
    <name evidence="1" type="primary">ybeY</name>
    <name type="ordered locus">MGAS2096_Spy0408</name>
</gene>
<organism>
    <name type="scientific">Streptococcus pyogenes serotype M12 (strain MGAS2096)</name>
    <dbReference type="NCBI Taxonomy" id="370553"/>
    <lineage>
        <taxon>Bacteria</taxon>
        <taxon>Bacillati</taxon>
        <taxon>Bacillota</taxon>
        <taxon>Bacilli</taxon>
        <taxon>Lactobacillales</taxon>
        <taxon>Streptococcaceae</taxon>
        <taxon>Streptococcus</taxon>
    </lineage>
</organism>
<name>YBEY_STRPB</name>
<protein>
    <recommendedName>
        <fullName evidence="1">Endoribonuclease YbeY</fullName>
        <ecNumber evidence="1">3.1.-.-</ecNumber>
    </recommendedName>
</protein>
<evidence type="ECO:0000255" key="1">
    <source>
        <dbReference type="HAMAP-Rule" id="MF_00009"/>
    </source>
</evidence>
<evidence type="ECO:0000305" key="2"/>
<accession>Q1JD48</accession>
<comment type="function">
    <text evidence="1">Single strand-specific metallo-endoribonuclease involved in late-stage 70S ribosome quality control and in maturation of the 3' terminus of the 16S rRNA.</text>
</comment>
<comment type="cofactor">
    <cofactor evidence="1">
        <name>Zn(2+)</name>
        <dbReference type="ChEBI" id="CHEBI:29105"/>
    </cofactor>
    <text evidence="1">Binds 1 zinc ion.</text>
</comment>
<comment type="subcellular location">
    <subcellularLocation>
        <location evidence="1">Cytoplasm</location>
    </subcellularLocation>
</comment>
<comment type="similarity">
    <text evidence="1">Belongs to the endoribonuclease YbeY family.</text>
</comment>
<comment type="sequence caution" evidence="2">
    <conflict type="erroneous initiation">
        <sequence resource="EMBL-CDS" id="ABF35460"/>
    </conflict>
</comment>
<keyword id="KW-0963">Cytoplasm</keyword>
<keyword id="KW-0255">Endonuclease</keyword>
<keyword id="KW-0378">Hydrolase</keyword>
<keyword id="KW-0479">Metal-binding</keyword>
<keyword id="KW-0540">Nuclease</keyword>
<keyword id="KW-0690">Ribosome biogenesis</keyword>
<keyword id="KW-0698">rRNA processing</keyword>
<keyword id="KW-0862">Zinc</keyword>
<proteinExistence type="inferred from homology"/>
<reference key="1">
    <citation type="journal article" date="2006" name="Proc. Natl. Acad. Sci. U.S.A.">
        <title>Molecular genetic anatomy of inter- and intraserotype variation in the human bacterial pathogen group A Streptococcus.</title>
        <authorList>
            <person name="Beres S.B."/>
            <person name="Richter E.W."/>
            <person name="Nagiec M.J."/>
            <person name="Sumby P."/>
            <person name="Porcella S.F."/>
            <person name="DeLeo F.R."/>
            <person name="Musser J.M."/>
        </authorList>
    </citation>
    <scope>NUCLEOTIDE SEQUENCE [LARGE SCALE GENOMIC DNA]</scope>
    <source>
        <strain>MGAS2096</strain>
    </source>
</reference>
<feature type="chain" id="PRO_0000284326" description="Endoribonuclease YbeY">
    <location>
        <begin position="1"/>
        <end position="165"/>
    </location>
</feature>
<feature type="binding site" evidence="1">
    <location>
        <position position="130"/>
    </location>
    <ligand>
        <name>Zn(2+)</name>
        <dbReference type="ChEBI" id="CHEBI:29105"/>
        <note>catalytic</note>
    </ligand>
</feature>
<feature type="binding site" evidence="1">
    <location>
        <position position="134"/>
    </location>
    <ligand>
        <name>Zn(2+)</name>
        <dbReference type="ChEBI" id="CHEBI:29105"/>
        <note>catalytic</note>
    </ligand>
</feature>
<feature type="binding site" evidence="1">
    <location>
        <position position="140"/>
    </location>
    <ligand>
        <name>Zn(2+)</name>
        <dbReference type="ChEBI" id="CHEBI:29105"/>
        <note>catalytic</note>
    </ligand>
</feature>